<comment type="function">
    <text evidence="2">GTP hydrolase that promotes the GTP-dependent binding of aminoacyl-tRNA to the A-site of ribosomes during protein biosynthesis.</text>
</comment>
<comment type="catalytic activity">
    <reaction evidence="2">
        <text>GTP + H2O = GDP + phosphate + H(+)</text>
        <dbReference type="Rhea" id="RHEA:19669"/>
        <dbReference type="ChEBI" id="CHEBI:15377"/>
        <dbReference type="ChEBI" id="CHEBI:15378"/>
        <dbReference type="ChEBI" id="CHEBI:37565"/>
        <dbReference type="ChEBI" id="CHEBI:43474"/>
        <dbReference type="ChEBI" id="CHEBI:58189"/>
        <dbReference type="EC" id="3.6.5.3"/>
    </reaction>
    <physiologicalReaction direction="left-to-right" evidence="2">
        <dbReference type="Rhea" id="RHEA:19670"/>
    </physiologicalReaction>
</comment>
<comment type="subunit">
    <text evidence="2">Monomer.</text>
</comment>
<comment type="subcellular location">
    <subcellularLocation>
        <location evidence="2">Cytoplasm</location>
    </subcellularLocation>
</comment>
<comment type="similarity">
    <text evidence="2">Belongs to the TRAFAC class translation factor GTPase superfamily. Classic translation factor GTPase family. EF-Tu/EF-1A subfamily.</text>
</comment>
<protein>
    <recommendedName>
        <fullName evidence="2">Elongation factor Tu</fullName>
        <shortName evidence="2">EF-Tu</shortName>
        <ecNumber evidence="2">3.6.5.3</ecNumber>
    </recommendedName>
</protein>
<organism>
    <name type="scientific">Rickettsia parkeri</name>
    <dbReference type="NCBI Taxonomy" id="35792"/>
    <lineage>
        <taxon>Bacteria</taxon>
        <taxon>Pseudomonadati</taxon>
        <taxon>Pseudomonadota</taxon>
        <taxon>Alphaproteobacteria</taxon>
        <taxon>Rickettsiales</taxon>
        <taxon>Rickettsiaceae</taxon>
        <taxon>Rickettsieae</taxon>
        <taxon>Rickettsia</taxon>
        <taxon>spotted fever group</taxon>
    </lineage>
</organism>
<proteinExistence type="inferred from homology"/>
<sequence>MAKAKFERTKPHVNIGTIGHVDHGKTSLTAAITIVLAKTGGAQATAYDQIDAAPEEKERGITISTAHVEYETKNRHYAHVDCPGHADYVKNMITGAAQMDGAILVVSAADGPMPQTREHILLAKQVGVPAMVVFLNKVDMVDDSDLLELVEMEVRELLSKYGFPGDEIPIIKGSALQALEGKPEGEKAINELMDAVDSYIPQPVRATDKPFLMPIEDVFSISGRSTVVTGRVESGIIKVGEEIEIVGLKDTQKTTCTGVEMFRKLLDEGQAGDNVGILLRGTKREEVERGQVLAKPGSIKPHDKFEAEVYVLSKEEGGRHTPFTNDYRPQFYFRTTDVTGTIKLPADKQMVMPGDNATFTVELIKPIAMQEGLKFSIREGGRTVGAGVVTKINN</sequence>
<gene>
    <name evidence="2" type="primary">tuf</name>
</gene>
<reference key="1">
    <citation type="journal article" date="2002" name="Mol. Biol. Evol.">
        <title>Proliferation and deterioration of Rickettsia palindromic elements.</title>
        <authorList>
            <person name="Amiri H."/>
            <person name="Alsmark C.M."/>
            <person name="Andersson S.G.E."/>
        </authorList>
    </citation>
    <scope>NUCLEOTIDE SEQUENCE [GENOMIC DNA]</scope>
</reference>
<accession>Q8KTA6</accession>
<feature type="chain" id="PRO_0000091377" description="Elongation factor Tu">
    <location>
        <begin position="1"/>
        <end position="394"/>
    </location>
</feature>
<feature type="domain" description="tr-type G">
    <location>
        <begin position="10"/>
        <end position="204"/>
    </location>
</feature>
<feature type="region of interest" description="G1" evidence="1">
    <location>
        <begin position="19"/>
        <end position="26"/>
    </location>
</feature>
<feature type="region of interest" description="G2" evidence="1">
    <location>
        <begin position="60"/>
        <end position="64"/>
    </location>
</feature>
<feature type="region of interest" description="G3" evidence="1">
    <location>
        <begin position="81"/>
        <end position="84"/>
    </location>
</feature>
<feature type="region of interest" description="G4" evidence="1">
    <location>
        <begin position="136"/>
        <end position="139"/>
    </location>
</feature>
<feature type="region of interest" description="G5" evidence="1">
    <location>
        <begin position="174"/>
        <end position="176"/>
    </location>
</feature>
<feature type="binding site" evidence="2">
    <location>
        <begin position="19"/>
        <end position="26"/>
    </location>
    <ligand>
        <name>GTP</name>
        <dbReference type="ChEBI" id="CHEBI:37565"/>
    </ligand>
</feature>
<feature type="binding site" evidence="2">
    <location>
        <position position="26"/>
    </location>
    <ligand>
        <name>Mg(2+)</name>
        <dbReference type="ChEBI" id="CHEBI:18420"/>
    </ligand>
</feature>
<feature type="binding site" evidence="2">
    <location>
        <begin position="81"/>
        <end position="85"/>
    </location>
    <ligand>
        <name>GTP</name>
        <dbReference type="ChEBI" id="CHEBI:37565"/>
    </ligand>
</feature>
<feature type="binding site" evidence="2">
    <location>
        <begin position="136"/>
        <end position="139"/>
    </location>
    <ligand>
        <name>GTP</name>
        <dbReference type="ChEBI" id="CHEBI:37565"/>
    </ligand>
</feature>
<keyword id="KW-0963">Cytoplasm</keyword>
<keyword id="KW-0251">Elongation factor</keyword>
<keyword id="KW-0342">GTP-binding</keyword>
<keyword id="KW-0378">Hydrolase</keyword>
<keyword id="KW-0460">Magnesium</keyword>
<keyword id="KW-0479">Metal-binding</keyword>
<keyword id="KW-0547">Nucleotide-binding</keyword>
<keyword id="KW-0648">Protein biosynthesis</keyword>
<evidence type="ECO:0000250" key="1"/>
<evidence type="ECO:0000255" key="2">
    <source>
        <dbReference type="HAMAP-Rule" id="MF_00118"/>
    </source>
</evidence>
<dbReference type="EC" id="3.6.5.3" evidence="2"/>
<dbReference type="EMBL" id="AF502180">
    <property type="protein sequence ID" value="AAM90932.1"/>
    <property type="molecule type" value="Genomic_DNA"/>
</dbReference>
<dbReference type="SMR" id="Q8KTA6"/>
<dbReference type="GO" id="GO:0005737">
    <property type="term" value="C:cytoplasm"/>
    <property type="evidence" value="ECO:0007669"/>
    <property type="project" value="UniProtKB-SubCell"/>
</dbReference>
<dbReference type="GO" id="GO:0005525">
    <property type="term" value="F:GTP binding"/>
    <property type="evidence" value="ECO:0007669"/>
    <property type="project" value="UniProtKB-UniRule"/>
</dbReference>
<dbReference type="GO" id="GO:0003924">
    <property type="term" value="F:GTPase activity"/>
    <property type="evidence" value="ECO:0007669"/>
    <property type="project" value="InterPro"/>
</dbReference>
<dbReference type="GO" id="GO:0097216">
    <property type="term" value="F:guanosine tetraphosphate binding"/>
    <property type="evidence" value="ECO:0007669"/>
    <property type="project" value="UniProtKB-ARBA"/>
</dbReference>
<dbReference type="GO" id="GO:0003746">
    <property type="term" value="F:translation elongation factor activity"/>
    <property type="evidence" value="ECO:0007669"/>
    <property type="project" value="UniProtKB-UniRule"/>
</dbReference>
<dbReference type="CDD" id="cd01884">
    <property type="entry name" value="EF_Tu"/>
    <property type="match status" value="1"/>
</dbReference>
<dbReference type="CDD" id="cd03697">
    <property type="entry name" value="EFTU_II"/>
    <property type="match status" value="1"/>
</dbReference>
<dbReference type="CDD" id="cd03707">
    <property type="entry name" value="EFTU_III"/>
    <property type="match status" value="1"/>
</dbReference>
<dbReference type="FunFam" id="2.40.30.10:FF:000001">
    <property type="entry name" value="Elongation factor Tu"/>
    <property type="match status" value="1"/>
</dbReference>
<dbReference type="FunFam" id="3.40.50.300:FF:000003">
    <property type="entry name" value="Elongation factor Tu"/>
    <property type="match status" value="1"/>
</dbReference>
<dbReference type="Gene3D" id="3.40.50.300">
    <property type="entry name" value="P-loop containing nucleotide triphosphate hydrolases"/>
    <property type="match status" value="1"/>
</dbReference>
<dbReference type="Gene3D" id="2.40.30.10">
    <property type="entry name" value="Translation factors"/>
    <property type="match status" value="2"/>
</dbReference>
<dbReference type="HAMAP" id="MF_00118_B">
    <property type="entry name" value="EF_Tu_B"/>
    <property type="match status" value="1"/>
</dbReference>
<dbReference type="InterPro" id="IPR041709">
    <property type="entry name" value="EF-Tu_GTP-bd"/>
</dbReference>
<dbReference type="InterPro" id="IPR050055">
    <property type="entry name" value="EF-Tu_GTPase"/>
</dbReference>
<dbReference type="InterPro" id="IPR004161">
    <property type="entry name" value="EFTu-like_2"/>
</dbReference>
<dbReference type="InterPro" id="IPR033720">
    <property type="entry name" value="EFTU_2"/>
</dbReference>
<dbReference type="InterPro" id="IPR031157">
    <property type="entry name" value="G_TR_CS"/>
</dbReference>
<dbReference type="InterPro" id="IPR027417">
    <property type="entry name" value="P-loop_NTPase"/>
</dbReference>
<dbReference type="InterPro" id="IPR005225">
    <property type="entry name" value="Small_GTP-bd"/>
</dbReference>
<dbReference type="InterPro" id="IPR000795">
    <property type="entry name" value="T_Tr_GTP-bd_dom"/>
</dbReference>
<dbReference type="InterPro" id="IPR009000">
    <property type="entry name" value="Transl_B-barrel_sf"/>
</dbReference>
<dbReference type="InterPro" id="IPR009001">
    <property type="entry name" value="Transl_elong_EF1A/Init_IF2_C"/>
</dbReference>
<dbReference type="InterPro" id="IPR004541">
    <property type="entry name" value="Transl_elong_EFTu/EF1A_bac/org"/>
</dbReference>
<dbReference type="InterPro" id="IPR004160">
    <property type="entry name" value="Transl_elong_EFTu/EF1A_C"/>
</dbReference>
<dbReference type="NCBIfam" id="TIGR00485">
    <property type="entry name" value="EF-Tu"/>
    <property type="match status" value="1"/>
</dbReference>
<dbReference type="NCBIfam" id="NF000766">
    <property type="entry name" value="PRK00049.1"/>
    <property type="match status" value="1"/>
</dbReference>
<dbReference type="NCBIfam" id="NF009372">
    <property type="entry name" value="PRK12735.1"/>
    <property type="match status" value="1"/>
</dbReference>
<dbReference type="NCBIfam" id="NF009373">
    <property type="entry name" value="PRK12736.1"/>
    <property type="match status" value="1"/>
</dbReference>
<dbReference type="NCBIfam" id="TIGR00231">
    <property type="entry name" value="small_GTP"/>
    <property type="match status" value="1"/>
</dbReference>
<dbReference type="PANTHER" id="PTHR43721:SF22">
    <property type="entry name" value="ELONGATION FACTOR TU, MITOCHONDRIAL"/>
    <property type="match status" value="1"/>
</dbReference>
<dbReference type="PANTHER" id="PTHR43721">
    <property type="entry name" value="ELONGATION FACTOR TU-RELATED"/>
    <property type="match status" value="1"/>
</dbReference>
<dbReference type="Pfam" id="PF00009">
    <property type="entry name" value="GTP_EFTU"/>
    <property type="match status" value="1"/>
</dbReference>
<dbReference type="Pfam" id="PF03144">
    <property type="entry name" value="GTP_EFTU_D2"/>
    <property type="match status" value="1"/>
</dbReference>
<dbReference type="Pfam" id="PF03143">
    <property type="entry name" value="GTP_EFTU_D3"/>
    <property type="match status" value="1"/>
</dbReference>
<dbReference type="PRINTS" id="PR00315">
    <property type="entry name" value="ELONGATNFCT"/>
</dbReference>
<dbReference type="SUPFAM" id="SSF50465">
    <property type="entry name" value="EF-Tu/eEF-1alpha/eIF2-gamma C-terminal domain"/>
    <property type="match status" value="1"/>
</dbReference>
<dbReference type="SUPFAM" id="SSF52540">
    <property type="entry name" value="P-loop containing nucleoside triphosphate hydrolases"/>
    <property type="match status" value="1"/>
</dbReference>
<dbReference type="SUPFAM" id="SSF50447">
    <property type="entry name" value="Translation proteins"/>
    <property type="match status" value="1"/>
</dbReference>
<dbReference type="PROSITE" id="PS00301">
    <property type="entry name" value="G_TR_1"/>
    <property type="match status" value="1"/>
</dbReference>
<dbReference type="PROSITE" id="PS51722">
    <property type="entry name" value="G_TR_2"/>
    <property type="match status" value="1"/>
</dbReference>
<name>EFTU_RICPA</name>